<proteinExistence type="evidence at protein level"/>
<comment type="function">
    <text evidence="6 7">Part of the Tip60 chromatin-remodeling complex which is involved in DNA repair (PubMed:15528408). Upon induction of DNA double-strand breaks, this complex acetylates phosphorylated H2AV in nucleosomes and exchanges it with unmodified H2AV (PubMed:15528408). During wing development, required for activity of Notch and its coactivator mam (PubMed:16508010). Function in promoting mam function is likely to involve both the Tip60 and SAGA complexes (PubMed:16508010).</text>
</comment>
<comment type="subunit">
    <text evidence="5 6">Component of the Tip60 chromatin-remodeling complex which contains the catalytic subunit Tip60 and the subunits Domino, Tra1, Brd8, E(Pc), DMAP1, Pontin, Reptin, Ing3, Act87E, BAP55, Mrg15, MrgBP, Gas41 and YL-1 (PubMed:15528408). Probable component of some SAGA complex (PubMed:12697829). Interacts with Spt3, Gcn5, Ada3 and Ada2b (PubMed:12697829).</text>
</comment>
<comment type="subcellular location">
    <subcellularLocation>
        <location evidence="7">Nucleus</location>
    </subcellularLocation>
    <subcellularLocation>
        <location evidence="7">Cytoplasm</location>
    </subcellularLocation>
    <subcellularLocation>
        <location evidence="7">Chromosome</location>
    </subcellularLocation>
</comment>
<comment type="alternative products">
    <event type="alternative splicing"/>
    <isoform>
        <id>Q8I8U7-1</id>
        <name evidence="9">E</name>
        <sequence type="displayed"/>
    </isoform>
    <isoform>
        <id>Q8I8U7-2</id>
        <name evidence="9">F</name>
        <sequence type="described" ref="VSP_059312"/>
    </isoform>
</comment>
<comment type="tissue specificity">
    <text evidence="5">Ubiquitous.</text>
</comment>
<comment type="developmental stage">
    <text evidence="5">Expressed both maternally and zygotically.</text>
</comment>
<comment type="miscellaneous">
    <text>Although strongly related to the PI3/PI4-kinase family, it lacks the typical motifs that constitute the catalytic site of PI3/PI4-kinase proteins, suggesting that it probably lacks such activity.</text>
</comment>
<comment type="similarity">
    <text evidence="8">Belongs to the PI3/PI4-kinase family. TRA1 subfamily.</text>
</comment>
<comment type="sequence caution" evidence="8">
    <conflict type="erroneous initiation">
        <sequence resource="EMBL-CDS" id="AAM11122"/>
    </conflict>
    <text>Truncated N-terminus.</text>
</comment>
<comment type="sequence caution" evidence="8">
    <conflict type="miscellaneous discrepancy">
        <sequence resource="EMBL-CDS" id="AAN52145"/>
    </conflict>
    <text>Contaminating sequence. Insertion of several transposable element sequences.</text>
</comment>
<name>TRA1_DROME</name>
<sequence length="3790" mass="435330">MSVIENVPVNTFRNYLNILNDSSSKDELKLKATQELSEHFEMIMQSPAYPSFLDNSLKIFMRILQDGEPQFIQENTMQHIRKLILEMIHRLPITESLRQHVKTIITMMLKILKTDNEENVLVCLRIIIELHKHFRPSFNSEIQLFLGFVKEIYTNLPNHLTSIFETSNDVWVTDLKDLNLEVLLSESYSVRTIHVEKALDSNSQQQIYNLLPRGILSLKVLQELPIIVVLMYQIYKNAVHQEVSEFIPLILTTINLQPTVTRRNSPQKEIYVEFMGAQIKTLSFLAYIVRIFQEVVIASSLSVTSGMLNLMKNCPKEAAHLRKELLIAARHIFATDLRQKFIPSIEQLFDEDLLIGKGVTLDSIRPLAYSTLADLAHHVRQSLNIDVLIKAVNLFSKNVHDESLAVGIQTMSCKLLLNLVDCLRHHSETEPQRSKALLSKLLKVFVKKFETIAKIQLPLIIQKCKGHAFSGALVNSSGNASLSHINAPDLKDDISNIQVSASGSQWIYSVNVAEFRSLVKTLVGGVKTITWGFFNSKFQLTDTKLANHEKIFGPEIVCSYIDLVYYAMEALDIYTINVNPNQQRTSGLISRSKEEKEVLEHFSGIFLMMHSQNFQEIFSTTINFLVERIYKNQSLQVIANSFLANPTTSPLFATVLVEYLLNKMEEMGSNLERSNLYLRLFKLVFGSVSLFPVENEQMLRPHLHKIVNRSMELALISEEPYNYFLLLRALFRSIGGGSHDLLYQEFLPLLPNLLEGLNRLQSGFHKQHMRDLFVELCLTVPVRLSSLLPYLPMLMDPLVSALNGSPTLISQGLRTLELCVDNLQPDFLYDHIQPVRAALMQALWKTLRNQDNAALVAFRVLGKFGGGNRKMMVEPQALSYIINDKPTISIVTYFQEYETPIDFPVDEAIKSAFRALGSNSTDQFYRRQSWEVIRCFLAAFISLDDEKHMLLKLFTHVDFVENKIMNWSTFQHKAGNETVRETHQTALIGMLVASATKDLRDSVCPVMAAVVRHYTMVAIAQQAGPFPQKGYQATHGIDPMILIDALASCMGHEEKELCKPGIACMGIILDTATNIMGNKDRACKLPIIQYLAEKMVSLCYDRPWYSKVGGCQAIQFLCKHMSLRALFQNLFNFLKAFMFVLMDLEGDVSNGAIEITKSYMKSMLEICLTPINECYKNIDLKDLQAKATYEVIHELVRHITSPNTIVREESMVLLKHIGTIQSKTVSEVMDPHKDVLADIIPPKKHLLRHQPANAQIGLMDGNTFCTTLEPRLFTIDLTNTYHKLFFHELLTLSEAEDATLAKLDCYKNVPNLIPLRTSALRALAACHYISDIGYKEKIINIIFKVMESDKSELQTTAFHCMKHFITGVTLEKEKVQSAMRPLLLKLGDHRNLSIPAIKRLSYFTQIFPQMFNEKLSEQILQHCSKIMEIFVSEYKSTSPNVNFFASSKGGEYEQKIVILIEMFFYISASVKYIEKLCQLVLKTEKNLMIEASSPYREALIKFLQRFPTETVDLFLTESLMIDPQWNRLFIYLLKHETGVSFRAVIKSSRYNNLIHYLNTHTEFPEALKYEIQHQAVLIIFTLMESDDQWIPTRQDIVDALKNCWQNYLSTLSSEDVLCDLWHLIGKILLHYFSNNTNDIELLFQLLRALCFRFIPDVYFLRDFLQHTVAQSFTVNWKRNAFFYFVENFNNSFLSEELKAKIITAVIIPCFAVSFDKGEGNKLIGAPPTPYQEDEKNIVSVFINKVFDPDKQYDDAVRIALLQLACLLVERASQHIHDGDANNKRQGNKLRRLMTFAWPCLLSKSSVDPTARYHGHLLLSHIIARLAIHKKIVLQVFHSLLKGHALEARSIVKQALDVLTPAMPLRMEDGNTMLTHWTKKIIVEEGHAMQQLFHILQLIIRHYKVYFPVRHQLVQHLINYMQRLGFPPTASIEHKKLAVDLAEVIIKWELHRIKDDRETKTDGTEEELIQESSVKRSGIDLVETRKKSFDIIRETTVQGVGSHTKPDDILRSIDKSYCDTVLNFLIRLACQVNDPQAPILSPGESLSRRCVMLLKMAMRPEIWPQPFDIKLNWLDKVLATVETPHHNLNNICTGIDFLTFLTTILSPDQLVSIIRPVQRGLSLCIIHQNTRIVRLMHMFLTRIMAIFPPDTQHKHEDLDLLYTAVSKMIAENLTSYEKSPQPNASSLFGTLMILKACTTNNASYIDRILVQFIRVLNHLTRDHINTIGGNTVISQSPDSNALPLELLVLSLELIKNRIFVMSVEIRKLFIGTILVSLIEKSTEVKIIKCIIKMLDEWIKTKEPNVMTQVPSIREKSALLVKLMQNVEKKFTDEIELNIQFLEIINFIYRDEILKQTELTNKLEGAFLNGLRFQNPNVRSKFFEILDSSMRRRLHDRLLYIICSQAWDTIGSHYWIKQCIELLILTANTMMQIQCSNEQFKIPSITSVIPVNSSETQENSFVSFLSSHSESFDIIQTVDDKDDVYDIDLNADRKEDCQQILPNRRVTLVELVYKQAEFLEANRNIRTDQMLVATSQLCHIDTQLAQSVWLSMFPRIWSIFTEDQRCNITKELIPFLSSGTNVNQKDCHPSTLNTFVESLTKCAPPIYIPPNLLAYLGKSHNLWHRAILVLEDMAVNQSMQSKDIDGGENQFSDLDVQQSNNIFDSLSKMYSSMHEEDLWAGLWLKFAHYPETNIAVSYEQMGFFEEAQGAYDLAMTKFKQDLSNGVVNTYVNSELLLWENHWMRCAKELNQWDILLDYAQTNKDKNMFLILESSWRVPDWNLMKIALAKTEQCYLKHYGFKINLYKGYLSILHQEERQTGNIERYVEIASSLCIREWRRLPNIVSHIHLPYLQASQQIMELHEASQIHQGLAQSRNNSLHDMKAIVKTWRNRLPIISDDLSHWSDIFTWRQHHYQIITQHLEQQSDQGSTMLGVHASAQAIISFGKIARKHNLTGVCQETLSRIYTIPSVPIVDCFQKIRQQVKCYLQMPSTSGKNEINEALEVIESTNLKYFTGEMNAEFYALKGLLLAQIGRSEEAGKSFSVAAQLHDGLTKAWAMWGDYMEQIFLKERKITLAVDALICYLQASRNQIESKTRKYIAKVLWFLSYDNNTKILISTLEKHVAGIPPSYWLPWIPQLLCCLEQFEGDVILNLLSQIGRLYPQAVYFPIRTLYLTLKIEQREKHKTAEQAVKSSCSNIDGTTLSFGRGASHGNIPSINPIKATPPMWRCSKVMQLQREVHPTILSSLEGIVDQMVWFRESWTEEVLRQLRQGLIKCYAIAFEKRDTVQHSTITPHTLHFVKKLGSTFGIGIENVPGSVTSSISNSAASESLARRAQVTFQDPVFQKMKEQFTNDFDFSKPGAMKLHNLISKLKTWIKVLETKVKKLPTSFLIEDKCRFLSNFSQKTAEVELPGELLIPLSSHYYVRIARFMPRVEIVQKNNTAARRLYIRGTNGKIYPYLVVLDSGLGDARREERVLQLKRMLNYYLEKQKETSRRFLNITVPRVVPISPQMRLAEDNPNSISLLKIFKKCCQSMQVDYDMPIVKYYDRLSEVQARGTPTTHTLLREIFSEIQWTMVPKTLLKHWALKTFLAATDFWHFRKMLTLQLALAFLCEHALNLTRLNADMMYLHQDSGLMNISYFKFDVNDDKCQLNQHRPVPFRLTPNVGEFITHFGITGPLSAAIVATARCFIQPNYKLSSILQTILRDEIIALQKKGFRECKLIEGSEDRYSDGNCMEHSVNIVNSAVDIIMTRFNKISYFDSIENKKISVLVQSATNIDNLCRMDPAWHPWL</sequence>
<keyword id="KW-0010">Activator</keyword>
<keyword id="KW-0025">Alternative splicing</keyword>
<keyword id="KW-0156">Chromatin regulator</keyword>
<keyword id="KW-0158">Chromosome</keyword>
<keyword id="KW-0963">Cytoplasm</keyword>
<keyword id="KW-0539">Nucleus</keyword>
<keyword id="KW-1185">Reference proteome</keyword>
<keyword id="KW-0677">Repeat</keyword>
<keyword id="KW-0804">Transcription</keyword>
<keyword id="KW-0805">Transcription regulation</keyword>
<dbReference type="EMBL" id="AY142217">
    <property type="protein sequence ID" value="AAN52145.1"/>
    <property type="status" value="ALT_SEQ"/>
    <property type="molecule type" value="mRNA"/>
</dbReference>
<dbReference type="EMBL" id="AE013599">
    <property type="protein sequence ID" value="ABI31023.2"/>
    <property type="molecule type" value="Genomic_DNA"/>
</dbReference>
<dbReference type="EMBL" id="AE013599">
    <property type="protein sequence ID" value="ABV53702.2"/>
    <property type="molecule type" value="Genomic_DNA"/>
</dbReference>
<dbReference type="EMBL" id="AY094769">
    <property type="protein sequence ID" value="AAM11122.1"/>
    <property type="status" value="ALT_INIT"/>
    <property type="molecule type" value="mRNA"/>
</dbReference>
<dbReference type="EMBL" id="DQ352451">
    <property type="protein sequence ID" value="ABD22987.1"/>
    <property type="molecule type" value="mRNA"/>
</dbReference>
<dbReference type="RefSeq" id="NP_001097192.2">
    <molecule id="Q8I8U7-1"/>
    <property type="nucleotide sequence ID" value="NM_001103722.3"/>
</dbReference>
<dbReference type="RefSeq" id="NP_001303335.1">
    <molecule id="Q8I8U7-2"/>
    <property type="nucleotide sequence ID" value="NM_001316406.1"/>
</dbReference>
<dbReference type="SMR" id="Q8I8U7"/>
<dbReference type="BioGRID" id="61398">
    <property type="interactions" value="34"/>
</dbReference>
<dbReference type="ComplexPortal" id="CPX-2264">
    <property type="entry name" value="NuA4 histone acetyltransferase complex"/>
</dbReference>
<dbReference type="ComplexPortal" id="CPX-2644">
    <property type="entry name" value="SAGA complex"/>
</dbReference>
<dbReference type="FunCoup" id="Q8I8U7">
    <property type="interactions" value="1473"/>
</dbReference>
<dbReference type="IntAct" id="Q8I8U7">
    <property type="interactions" value="21"/>
</dbReference>
<dbReference type="MINT" id="Q8I8U7"/>
<dbReference type="STRING" id="7227.FBpp0292385"/>
<dbReference type="PaxDb" id="7227-FBpp0085431"/>
<dbReference type="EnsemblMetazoa" id="FBtr0303293">
    <molecule id="Q8I8U7-1"/>
    <property type="protein sequence ID" value="FBpp0292385"/>
    <property type="gene ID" value="FBgn0053554"/>
</dbReference>
<dbReference type="EnsemblMetazoa" id="FBtr0347556">
    <molecule id="Q8I8U7-2"/>
    <property type="protein sequence ID" value="FBpp0312589"/>
    <property type="gene ID" value="FBgn0053554"/>
</dbReference>
<dbReference type="GeneID" id="35483"/>
<dbReference type="KEGG" id="dme:Dmel_CG33554"/>
<dbReference type="UCSC" id="CG33554-RA">
    <property type="organism name" value="d. melanogaster"/>
</dbReference>
<dbReference type="UCSC" id="CG33554-RD">
    <property type="organism name" value="d. melanogaster"/>
</dbReference>
<dbReference type="AGR" id="FB:FBgn0053554"/>
<dbReference type="CTD" id="35483"/>
<dbReference type="FlyBase" id="FBgn0053554">
    <property type="gene designation" value="Nipped-A"/>
</dbReference>
<dbReference type="VEuPathDB" id="VectorBase:FBgn0053554"/>
<dbReference type="eggNOG" id="KOG0889">
    <property type="taxonomic scope" value="Eukaryota"/>
</dbReference>
<dbReference type="GeneTree" id="ENSGT00390000017961"/>
<dbReference type="InParanoid" id="Q8I8U7"/>
<dbReference type="OMA" id="CLDLYGQ"/>
<dbReference type="OrthoDB" id="5570127at2759"/>
<dbReference type="PhylomeDB" id="Q8I8U7"/>
<dbReference type="Reactome" id="R-DME-201722">
    <property type="pathway name" value="Formation of the beta-catenin:TCF transactivating complex"/>
</dbReference>
<dbReference type="Reactome" id="R-DME-5689880">
    <property type="pathway name" value="Ub-specific processing proteases"/>
</dbReference>
<dbReference type="SignaLink" id="Q8I8U7"/>
<dbReference type="BioGRID-ORCS" id="35483">
    <property type="hits" value="1 hit in 3 CRISPR screens"/>
</dbReference>
<dbReference type="ChiTaRS" id="Nipped-A">
    <property type="organism name" value="fly"/>
</dbReference>
<dbReference type="GenomeRNAi" id="35483"/>
<dbReference type="PRO" id="PR:Q8I8U7"/>
<dbReference type="Proteomes" id="UP000000803">
    <property type="component" value="Chromosome 2R"/>
</dbReference>
<dbReference type="Bgee" id="FBgn0053554">
    <property type="expression patterns" value="Expressed in spermatocyte cyst cell (Drosophila) in testis and 272 other cell types or tissues"/>
</dbReference>
<dbReference type="ExpressionAtlas" id="Q8I8U7">
    <property type="expression patterns" value="baseline and differential"/>
</dbReference>
<dbReference type="GO" id="GO:0005737">
    <property type="term" value="C:cytoplasm"/>
    <property type="evidence" value="ECO:0000314"/>
    <property type="project" value="FlyBase"/>
</dbReference>
<dbReference type="GO" id="GO:0000123">
    <property type="term" value="C:histone acetyltransferase complex"/>
    <property type="evidence" value="ECO:0000314"/>
    <property type="project" value="UniProtKB"/>
</dbReference>
<dbReference type="GO" id="GO:0035267">
    <property type="term" value="C:NuA4 histone acetyltransferase complex"/>
    <property type="evidence" value="ECO:0000314"/>
    <property type="project" value="UniProtKB"/>
</dbReference>
<dbReference type="GO" id="GO:0005634">
    <property type="term" value="C:nucleus"/>
    <property type="evidence" value="ECO:0000314"/>
    <property type="project" value="FlyBase"/>
</dbReference>
<dbReference type="GO" id="GO:0005700">
    <property type="term" value="C:polytene chromosome"/>
    <property type="evidence" value="ECO:0000314"/>
    <property type="project" value="FlyBase"/>
</dbReference>
<dbReference type="GO" id="GO:0005703">
    <property type="term" value="C:polytene chromosome puff"/>
    <property type="evidence" value="ECO:0000314"/>
    <property type="project" value="FlyBase"/>
</dbReference>
<dbReference type="GO" id="GO:0000124">
    <property type="term" value="C:SAGA complex"/>
    <property type="evidence" value="ECO:0000314"/>
    <property type="project" value="FlyBase"/>
</dbReference>
<dbReference type="GO" id="GO:0140861">
    <property type="term" value="P:DNA repair-dependent chromatin remodeling"/>
    <property type="evidence" value="ECO:0000314"/>
    <property type="project" value="FlyBase"/>
</dbReference>
<dbReference type="GO" id="GO:0006355">
    <property type="term" value="P:regulation of DNA-templated transcription"/>
    <property type="evidence" value="ECO:0000314"/>
    <property type="project" value="UniProtKB"/>
</dbReference>
<dbReference type="GO" id="GO:0035222">
    <property type="term" value="P:wing disc pattern formation"/>
    <property type="evidence" value="ECO:0000316"/>
    <property type="project" value="FlyBase"/>
</dbReference>
<dbReference type="CDD" id="cd05163">
    <property type="entry name" value="PIKK_TRRAP"/>
    <property type="match status" value="1"/>
</dbReference>
<dbReference type="Gene3D" id="1.25.10.10">
    <property type="entry name" value="Leucine-rich Repeat Variant"/>
    <property type="match status" value="1"/>
</dbReference>
<dbReference type="InterPro" id="IPR011989">
    <property type="entry name" value="ARM-like"/>
</dbReference>
<dbReference type="InterPro" id="IPR016024">
    <property type="entry name" value="ARM-type_fold"/>
</dbReference>
<dbReference type="InterPro" id="IPR050517">
    <property type="entry name" value="DDR_Repair_Kinase"/>
</dbReference>
<dbReference type="InterPro" id="IPR003152">
    <property type="entry name" value="FATC_dom"/>
</dbReference>
<dbReference type="InterPro" id="IPR011009">
    <property type="entry name" value="Kinase-like_dom_sf"/>
</dbReference>
<dbReference type="InterPro" id="IPR000403">
    <property type="entry name" value="PI3/4_kinase_cat_dom"/>
</dbReference>
<dbReference type="InterPro" id="IPR003151">
    <property type="entry name" value="PIK-rel_kinase_FAT"/>
</dbReference>
<dbReference type="InterPro" id="IPR014009">
    <property type="entry name" value="PIK_FAT"/>
</dbReference>
<dbReference type="InterPro" id="IPR046807">
    <property type="entry name" value="Tra1_central"/>
</dbReference>
<dbReference type="InterPro" id="IPR046805">
    <property type="entry name" value="Tra1_ring"/>
</dbReference>
<dbReference type="PANTHER" id="PTHR11139">
    <property type="entry name" value="ATAXIA TELANGIECTASIA MUTATED ATM -RELATED"/>
    <property type="match status" value="1"/>
</dbReference>
<dbReference type="PANTHER" id="PTHR11139:SF1">
    <property type="entry name" value="TRANSFORMATION_TRANSCRIPTION DOMAIN-ASSOCIATED PROTEIN"/>
    <property type="match status" value="1"/>
</dbReference>
<dbReference type="Pfam" id="PF02259">
    <property type="entry name" value="FAT"/>
    <property type="match status" value="1"/>
</dbReference>
<dbReference type="Pfam" id="PF02260">
    <property type="entry name" value="FATC"/>
    <property type="match status" value="1"/>
</dbReference>
<dbReference type="Pfam" id="PF00454">
    <property type="entry name" value="PI3_PI4_kinase"/>
    <property type="match status" value="1"/>
</dbReference>
<dbReference type="Pfam" id="PF20175">
    <property type="entry name" value="Tra1_central"/>
    <property type="match status" value="1"/>
</dbReference>
<dbReference type="Pfam" id="PF20206">
    <property type="entry name" value="Tra1_ring"/>
    <property type="match status" value="1"/>
</dbReference>
<dbReference type="SMART" id="SM01343">
    <property type="entry name" value="FATC"/>
    <property type="match status" value="1"/>
</dbReference>
<dbReference type="SMART" id="SM00146">
    <property type="entry name" value="PI3Kc"/>
    <property type="match status" value="1"/>
</dbReference>
<dbReference type="SUPFAM" id="SSF48371">
    <property type="entry name" value="ARM repeat"/>
    <property type="match status" value="2"/>
</dbReference>
<dbReference type="SUPFAM" id="SSF56112">
    <property type="entry name" value="Protein kinase-like (PK-like)"/>
    <property type="match status" value="1"/>
</dbReference>
<dbReference type="PROSITE" id="PS51189">
    <property type="entry name" value="FAT"/>
    <property type="match status" value="1"/>
</dbReference>
<dbReference type="PROSITE" id="PS51190">
    <property type="entry name" value="FATC"/>
    <property type="match status" value="1"/>
</dbReference>
<dbReference type="PROSITE" id="PS50290">
    <property type="entry name" value="PI3_4_KINASE_3"/>
    <property type="match status" value="1"/>
</dbReference>
<organism>
    <name type="scientific">Drosophila melanogaster</name>
    <name type="common">Fruit fly</name>
    <dbReference type="NCBI Taxonomy" id="7227"/>
    <lineage>
        <taxon>Eukaryota</taxon>
        <taxon>Metazoa</taxon>
        <taxon>Ecdysozoa</taxon>
        <taxon>Arthropoda</taxon>
        <taxon>Hexapoda</taxon>
        <taxon>Insecta</taxon>
        <taxon>Pterygota</taxon>
        <taxon>Neoptera</taxon>
        <taxon>Endopterygota</taxon>
        <taxon>Diptera</taxon>
        <taxon>Brachycera</taxon>
        <taxon>Muscomorpha</taxon>
        <taxon>Ephydroidea</taxon>
        <taxon>Drosophilidae</taxon>
        <taxon>Drosophila</taxon>
        <taxon>Sophophora</taxon>
    </lineage>
</organism>
<accession>Q8I8U7</accession>
<accession>A0A140SQB4</accession>
<accession>A8DY44</accession>
<accession>Q2EZ47</accession>
<accession>Q8T3L7</accession>
<accession>Q9V9E9</accession>
<protein>
    <recommendedName>
        <fullName>Transcription-associated protein 1</fullName>
    </recommendedName>
    <alternativeName>
        <fullName>dTRA1</fullName>
    </alternativeName>
</protein>
<reference key="1">
    <citation type="journal article" date="2003" name="Mol. Cell. Biol.">
        <title>Two Drosophila Ada2 homologues function in different multiprotein complexes.</title>
        <authorList>
            <person name="Kusch T."/>
            <person name="Guelman S."/>
            <person name="Abmayr S.M."/>
            <person name="Workman J.L."/>
        </authorList>
    </citation>
    <scope>NUCLEOTIDE SEQUENCE [MRNA] (ISOFORM F)</scope>
    <scope>TISSUE SPECIFICITY</scope>
    <scope>DEVELOPMENTAL STAGE</scope>
    <scope>INTERACTION WITH SPT3; GCN5; ADA3 AND ADA2B</scope>
</reference>
<reference key="2">
    <citation type="journal article" date="2006" name="Mol. Cell. Biol.">
        <title>Nipped-A, the Tra1/TRRAP subunit of the Drosophila SAGA and Tip60 complexes, has multiple roles in Notch signaling during wing development.</title>
        <authorList>
            <person name="Gause M."/>
            <person name="Eissenberg J.C."/>
            <person name="Macrae A.F."/>
            <person name="Dorsett M."/>
            <person name="Misulovin Z."/>
            <person name="Dorsett D."/>
        </authorList>
    </citation>
    <scope>NUCLEOTIDE SEQUENCE [MRNA] (ISOFORM E)</scope>
    <scope>FUNCTION</scope>
    <scope>SUBCELLULAR LOCATION</scope>
</reference>
<reference key="3">
    <citation type="journal article" date="2000" name="Science">
        <title>The genome sequence of Drosophila melanogaster.</title>
        <authorList>
            <person name="Adams M.D."/>
            <person name="Celniker S.E."/>
            <person name="Holt R.A."/>
            <person name="Evans C.A."/>
            <person name="Gocayne J.D."/>
            <person name="Amanatides P.G."/>
            <person name="Scherer S.E."/>
            <person name="Li P.W."/>
            <person name="Hoskins R.A."/>
            <person name="Galle R.F."/>
            <person name="George R.A."/>
            <person name="Lewis S.E."/>
            <person name="Richards S."/>
            <person name="Ashburner M."/>
            <person name="Henderson S.N."/>
            <person name="Sutton G.G."/>
            <person name="Wortman J.R."/>
            <person name="Yandell M.D."/>
            <person name="Zhang Q."/>
            <person name="Chen L.X."/>
            <person name="Brandon R.C."/>
            <person name="Rogers Y.-H.C."/>
            <person name="Blazej R.G."/>
            <person name="Champe M."/>
            <person name="Pfeiffer B.D."/>
            <person name="Wan K.H."/>
            <person name="Doyle C."/>
            <person name="Baxter E.G."/>
            <person name="Helt G."/>
            <person name="Nelson C.R."/>
            <person name="Miklos G.L.G."/>
            <person name="Abril J.F."/>
            <person name="Agbayani A."/>
            <person name="An H.-J."/>
            <person name="Andrews-Pfannkoch C."/>
            <person name="Baldwin D."/>
            <person name="Ballew R.M."/>
            <person name="Basu A."/>
            <person name="Baxendale J."/>
            <person name="Bayraktaroglu L."/>
            <person name="Beasley E.M."/>
            <person name="Beeson K.Y."/>
            <person name="Benos P.V."/>
            <person name="Berman B.P."/>
            <person name="Bhandari D."/>
            <person name="Bolshakov S."/>
            <person name="Borkova D."/>
            <person name="Botchan M.R."/>
            <person name="Bouck J."/>
            <person name="Brokstein P."/>
            <person name="Brottier P."/>
            <person name="Burtis K.C."/>
            <person name="Busam D.A."/>
            <person name="Butler H."/>
            <person name="Cadieu E."/>
            <person name="Center A."/>
            <person name="Chandra I."/>
            <person name="Cherry J.M."/>
            <person name="Cawley S."/>
            <person name="Dahlke C."/>
            <person name="Davenport L.B."/>
            <person name="Davies P."/>
            <person name="de Pablos B."/>
            <person name="Delcher A."/>
            <person name="Deng Z."/>
            <person name="Mays A.D."/>
            <person name="Dew I."/>
            <person name="Dietz S.M."/>
            <person name="Dodson K."/>
            <person name="Doup L.E."/>
            <person name="Downes M."/>
            <person name="Dugan-Rocha S."/>
            <person name="Dunkov B.C."/>
            <person name="Dunn P."/>
            <person name="Durbin K.J."/>
            <person name="Evangelista C.C."/>
            <person name="Ferraz C."/>
            <person name="Ferriera S."/>
            <person name="Fleischmann W."/>
            <person name="Fosler C."/>
            <person name="Gabrielian A.E."/>
            <person name="Garg N.S."/>
            <person name="Gelbart W.M."/>
            <person name="Glasser K."/>
            <person name="Glodek A."/>
            <person name="Gong F."/>
            <person name="Gorrell J.H."/>
            <person name="Gu Z."/>
            <person name="Guan P."/>
            <person name="Harris M."/>
            <person name="Harris N.L."/>
            <person name="Harvey D.A."/>
            <person name="Heiman T.J."/>
            <person name="Hernandez J.R."/>
            <person name="Houck J."/>
            <person name="Hostin D."/>
            <person name="Houston K.A."/>
            <person name="Howland T.J."/>
            <person name="Wei M.-H."/>
            <person name="Ibegwam C."/>
            <person name="Jalali M."/>
            <person name="Kalush F."/>
            <person name="Karpen G.H."/>
            <person name="Ke Z."/>
            <person name="Kennison J.A."/>
            <person name="Ketchum K.A."/>
            <person name="Kimmel B.E."/>
            <person name="Kodira C.D."/>
            <person name="Kraft C.L."/>
            <person name="Kravitz S."/>
            <person name="Kulp D."/>
            <person name="Lai Z."/>
            <person name="Lasko P."/>
            <person name="Lei Y."/>
            <person name="Levitsky A.A."/>
            <person name="Li J.H."/>
            <person name="Li Z."/>
            <person name="Liang Y."/>
            <person name="Lin X."/>
            <person name="Liu X."/>
            <person name="Mattei B."/>
            <person name="McIntosh T.C."/>
            <person name="McLeod M.P."/>
            <person name="McPherson D."/>
            <person name="Merkulov G."/>
            <person name="Milshina N.V."/>
            <person name="Mobarry C."/>
            <person name="Morris J."/>
            <person name="Moshrefi A."/>
            <person name="Mount S.M."/>
            <person name="Moy M."/>
            <person name="Murphy B."/>
            <person name="Murphy L."/>
            <person name="Muzny D.M."/>
            <person name="Nelson D.L."/>
            <person name="Nelson D.R."/>
            <person name="Nelson K.A."/>
            <person name="Nixon K."/>
            <person name="Nusskern D.R."/>
            <person name="Pacleb J.M."/>
            <person name="Palazzolo M."/>
            <person name="Pittman G.S."/>
            <person name="Pan S."/>
            <person name="Pollard J."/>
            <person name="Puri V."/>
            <person name="Reese M.G."/>
            <person name="Reinert K."/>
            <person name="Remington K."/>
            <person name="Saunders R.D.C."/>
            <person name="Scheeler F."/>
            <person name="Shen H."/>
            <person name="Shue B.C."/>
            <person name="Siden-Kiamos I."/>
            <person name="Simpson M."/>
            <person name="Skupski M.P."/>
            <person name="Smith T.J."/>
            <person name="Spier E."/>
            <person name="Spradling A.C."/>
            <person name="Stapleton M."/>
            <person name="Strong R."/>
            <person name="Sun E."/>
            <person name="Svirskas R."/>
            <person name="Tector C."/>
            <person name="Turner R."/>
            <person name="Venter E."/>
            <person name="Wang A.H."/>
            <person name="Wang X."/>
            <person name="Wang Z.-Y."/>
            <person name="Wassarman D.A."/>
            <person name="Weinstock G.M."/>
            <person name="Weissenbach J."/>
            <person name="Williams S.M."/>
            <person name="Woodage T."/>
            <person name="Worley K.C."/>
            <person name="Wu D."/>
            <person name="Yang S."/>
            <person name="Yao Q.A."/>
            <person name="Ye J."/>
            <person name="Yeh R.-F."/>
            <person name="Zaveri J.S."/>
            <person name="Zhan M."/>
            <person name="Zhang G."/>
            <person name="Zhao Q."/>
            <person name="Zheng L."/>
            <person name="Zheng X.H."/>
            <person name="Zhong F.N."/>
            <person name="Zhong W."/>
            <person name="Zhou X."/>
            <person name="Zhu S.C."/>
            <person name="Zhu X."/>
            <person name="Smith H.O."/>
            <person name="Gibbs R.A."/>
            <person name="Myers E.W."/>
            <person name="Rubin G.M."/>
            <person name="Venter J.C."/>
        </authorList>
    </citation>
    <scope>NUCLEOTIDE SEQUENCE [LARGE SCALE GENOMIC DNA]</scope>
    <source>
        <strain>Berkeley</strain>
    </source>
</reference>
<reference key="4">
    <citation type="journal article" date="2002" name="Genome Biol.">
        <title>Annotation of the Drosophila melanogaster euchromatic genome: a systematic review.</title>
        <authorList>
            <person name="Misra S."/>
            <person name="Crosby M.A."/>
            <person name="Mungall C.J."/>
            <person name="Matthews B.B."/>
            <person name="Campbell K.S."/>
            <person name="Hradecky P."/>
            <person name="Huang Y."/>
            <person name="Kaminker J.S."/>
            <person name="Millburn G.H."/>
            <person name="Prochnik S.E."/>
            <person name="Smith C.D."/>
            <person name="Tupy J.L."/>
            <person name="Whitfield E.J."/>
            <person name="Bayraktaroglu L."/>
            <person name="Berman B.P."/>
            <person name="Bettencourt B.R."/>
            <person name="Celniker S.E."/>
            <person name="de Grey A.D.N.J."/>
            <person name="Drysdale R.A."/>
            <person name="Harris N.L."/>
            <person name="Richter J."/>
            <person name="Russo S."/>
            <person name="Schroeder A.J."/>
            <person name="Shu S.Q."/>
            <person name="Stapleton M."/>
            <person name="Yamada C."/>
            <person name="Ashburner M."/>
            <person name="Gelbart W.M."/>
            <person name="Rubin G.M."/>
            <person name="Lewis S.E."/>
        </authorList>
    </citation>
    <scope>GENOME REANNOTATION</scope>
    <source>
        <strain>Berkeley</strain>
    </source>
</reference>
<reference key="5">
    <citation type="journal article" date="2002" name="Genome Biol.">
        <title>A Drosophila full-length cDNA resource.</title>
        <authorList>
            <person name="Stapleton M."/>
            <person name="Carlson J.W."/>
            <person name="Brokstein P."/>
            <person name="Yu C."/>
            <person name="Champe M."/>
            <person name="George R.A."/>
            <person name="Guarin H."/>
            <person name="Kronmiller B."/>
            <person name="Pacleb J.M."/>
            <person name="Park S."/>
            <person name="Wan K.H."/>
            <person name="Rubin G.M."/>
            <person name="Celniker S.E."/>
        </authorList>
    </citation>
    <scope>NUCLEOTIDE SEQUENCE [LARGE SCALE MRNA] OF 357-593 (ISOFORM F)</scope>
    <source>
        <strain>Berkeley</strain>
        <tissue>Ovary</tissue>
    </source>
</reference>
<reference key="6">
    <citation type="journal article" date="2004" name="Science">
        <title>Acetylation by Tip60 is required for selective histone variant exchange at DNA lesions.</title>
        <authorList>
            <person name="Kusch T."/>
            <person name="Florens L."/>
            <person name="Macdonald W.H."/>
            <person name="Swanson S.K."/>
            <person name="Glaser R.L."/>
            <person name="Yates J.R. III"/>
            <person name="Abmayr S.M."/>
            <person name="Washburn M.P."/>
            <person name="Workman J.L."/>
        </authorList>
    </citation>
    <scope>IDENTIFICATION IN THE TIP60 COMPLEX</scope>
    <scope>FUNCTION</scope>
</reference>
<feature type="chain" id="PRO_0000088853" description="Transcription-associated protein 1">
    <location>
        <begin position="1"/>
        <end position="3790"/>
    </location>
</feature>
<feature type="repeat" description="HEAT 1" evidence="1">
    <location>
        <begin position="98"/>
        <end position="136"/>
    </location>
</feature>
<feature type="repeat" description="HEAT 2" evidence="1">
    <location>
        <begin position="335"/>
        <end position="381"/>
    </location>
</feature>
<feature type="repeat" description="HEAT 3" evidence="1">
    <location>
        <begin position="740"/>
        <end position="778"/>
    </location>
</feature>
<feature type="repeat" description="HEAT 4" evidence="1">
    <location>
        <begin position="1185"/>
        <end position="1223"/>
    </location>
</feature>
<feature type="repeat" description="HEAT 5" evidence="1">
    <location>
        <begin position="1332"/>
        <end position="1370"/>
    </location>
</feature>
<feature type="repeat" description="HEAT 6" evidence="1">
    <location>
        <begin position="1826"/>
        <end position="1864"/>
    </location>
</feature>
<feature type="domain" description="FAT" evidence="3">
    <location>
        <begin position="2610"/>
        <end position="3173"/>
    </location>
</feature>
<feature type="domain" description="PI3K/PI4K catalytic" evidence="2">
    <location>
        <begin position="3429"/>
        <end position="3753"/>
    </location>
</feature>
<feature type="domain" description="FATC" evidence="4">
    <location>
        <begin position="3758"/>
        <end position="3790"/>
    </location>
</feature>
<feature type="region of interest" description="G-loop" evidence="2">
    <location>
        <begin position="3435"/>
        <end position="3441"/>
    </location>
</feature>
<feature type="region of interest" description="Catalytic loop" evidence="2">
    <location>
        <begin position="3616"/>
        <end position="3624"/>
    </location>
</feature>
<feature type="region of interest" description="Activation loop" evidence="2">
    <location>
        <begin position="3636"/>
        <end position="3661"/>
    </location>
</feature>
<feature type="splice variant" id="VSP_059312" description="In isoform F.">
    <original>VGSHTKPDDILRSIDKSYCDTVLNFLIRLACQVNDPQAPILSPGESLSRR</original>
    <variation>K</variation>
    <location>
        <begin position="1999"/>
        <end position="2048"/>
    </location>
</feature>
<feature type="sequence conflict" description="In Ref. 5; AAM11122." evidence="8" ref="5">
    <original>A</original>
    <variation>T</variation>
    <location>
        <position position="468"/>
    </location>
</feature>
<evidence type="ECO:0000255" key="1"/>
<evidence type="ECO:0000255" key="2">
    <source>
        <dbReference type="PROSITE-ProRule" id="PRU00269"/>
    </source>
</evidence>
<evidence type="ECO:0000255" key="3">
    <source>
        <dbReference type="PROSITE-ProRule" id="PRU00534"/>
    </source>
</evidence>
<evidence type="ECO:0000255" key="4">
    <source>
        <dbReference type="PROSITE-ProRule" id="PRU00535"/>
    </source>
</evidence>
<evidence type="ECO:0000269" key="5">
    <source>
    </source>
</evidence>
<evidence type="ECO:0000269" key="6">
    <source>
    </source>
</evidence>
<evidence type="ECO:0000269" key="7">
    <source>
    </source>
</evidence>
<evidence type="ECO:0000305" key="8"/>
<evidence type="ECO:0000312" key="9">
    <source>
        <dbReference type="FlyBase" id="FBgn0053554"/>
    </source>
</evidence>
<gene>
    <name type="primary">Nipped-A</name>
    <name type="synonym">Tra1</name>
    <name type="ORF">CG2905</name>
</gene>